<feature type="chain" id="PRO_0000133431" description="Protein E7">
    <location>
        <begin position="1"/>
        <end position="97"/>
    </location>
</feature>
<feature type="zinc finger region" evidence="1">
    <location>
        <begin position="58"/>
        <end position="94"/>
    </location>
</feature>
<feature type="region of interest" description="E7 terminal domain" evidence="1">
    <location>
        <begin position="1"/>
        <end position="40"/>
    </location>
</feature>
<feature type="short sequence motif" description="LXCXE motif; interaction with host RB1 and TMEM173/STING" evidence="1">
    <location>
        <begin position="22"/>
        <end position="26"/>
    </location>
</feature>
<feature type="short sequence motif" description="Nuclear export signal" evidence="1">
    <location>
        <begin position="76"/>
        <end position="84"/>
    </location>
</feature>
<organism>
    <name type="scientific">Human papillomavirus 33</name>
    <dbReference type="NCBI Taxonomy" id="10586"/>
    <lineage>
        <taxon>Viruses</taxon>
        <taxon>Monodnaviria</taxon>
        <taxon>Shotokuvirae</taxon>
        <taxon>Cossaviricota</taxon>
        <taxon>Papovaviricetes</taxon>
        <taxon>Zurhausenvirales</taxon>
        <taxon>Papillomaviridae</taxon>
        <taxon>Firstpapillomavirinae</taxon>
        <taxon>Alphapapillomavirus</taxon>
        <taxon>Alphapapillomavirus 9</taxon>
    </lineage>
</organism>
<sequence length="97" mass="10837">MRGHKPTLKEYVLDLYPEPTDLYCYEQLSDSSDEDEGLDRPDGQAQPATADYYIVTCCHTCNTTVRLCVNSTASDLRTIQQLLMGTVNIVCPTCAQQ</sequence>
<proteinExistence type="inferred from homology"/>
<gene>
    <name evidence="1" type="primary">E7</name>
</gene>
<evidence type="ECO:0000255" key="1">
    <source>
        <dbReference type="HAMAP-Rule" id="MF_04004"/>
    </source>
</evidence>
<protein>
    <recommendedName>
        <fullName evidence="1">Protein E7</fullName>
    </recommendedName>
</protein>
<accession>P06429</accession>
<reference key="1">
    <citation type="journal article" date="1986" name="J. Virol.">
        <title>Genome organization and nucleotide sequence of human papillomavirus type 33, which is associated with cervical cancer.</title>
        <authorList>
            <person name="Cole S.T."/>
            <person name="Streeck R.E."/>
        </authorList>
    </citation>
    <scope>NUCLEOTIDE SEQUENCE [GENOMIC DNA]</scope>
</reference>
<reference key="2">
    <citation type="journal article" date="1992" name="J. Virol.">
        <title>Human papillomavirus type 33 in a tonsillar carcinoma generates its putative E7 mRNA via two E6* transcript species which are terminated at different early region poly(A) sites.</title>
        <authorList>
            <person name="Snijders P.J.F."/>
            <person name="van den Brule A.J.C."/>
            <person name="Schrijnemakers H.F.J."/>
            <person name="Raaphorst P.M.C."/>
            <person name="Meijer C.J.L.M."/>
            <person name="Walboomers J.M.M."/>
        </authorList>
    </citation>
    <scope>NUCLEOTIDE SEQUENCE [MRNA]</scope>
</reference>
<reference key="3">
    <citation type="journal article" date="2002" name="Rev. Med. Virol.">
        <title>Interactions of SV40 large T antigen and other viral proteins with retinoblastoma tumour suppressor.</title>
        <authorList>
            <person name="Lee C."/>
            <person name="Cho Y."/>
        </authorList>
    </citation>
    <scope>REVIEW</scope>
</reference>
<name>VE7_HPV33</name>
<organismHost>
    <name type="scientific">Homo sapiens</name>
    <name type="common">Human</name>
    <dbReference type="NCBI Taxonomy" id="9606"/>
</organismHost>
<dbReference type="EMBL" id="M12732">
    <property type="protein sequence ID" value="AAA46959.1"/>
    <property type="molecule type" value="Genomic_DNA"/>
</dbReference>
<dbReference type="EMBL" id="X64084">
    <property type="protein sequence ID" value="CAA45430.1"/>
    <property type="molecule type" value="mRNA"/>
</dbReference>
<dbReference type="EMBL" id="X64085">
    <property type="protein sequence ID" value="CAA45434.1"/>
    <property type="molecule type" value="mRNA"/>
</dbReference>
<dbReference type="PIR" id="A03689">
    <property type="entry name" value="W7WL33"/>
</dbReference>
<dbReference type="SMR" id="P06429"/>
<dbReference type="IntAct" id="P06429">
    <property type="interactions" value="82"/>
</dbReference>
<dbReference type="MINT" id="P06429"/>
<dbReference type="Proteomes" id="UP000009118">
    <property type="component" value="Genome"/>
</dbReference>
<dbReference type="GO" id="GO:0030430">
    <property type="term" value="C:host cell cytoplasm"/>
    <property type="evidence" value="ECO:0007669"/>
    <property type="project" value="UniProtKB-SubCell"/>
</dbReference>
<dbReference type="GO" id="GO:0042025">
    <property type="term" value="C:host cell nucleus"/>
    <property type="evidence" value="ECO:0007669"/>
    <property type="project" value="UniProtKB-SubCell"/>
</dbReference>
<dbReference type="GO" id="GO:0003677">
    <property type="term" value="F:DNA binding"/>
    <property type="evidence" value="ECO:0007669"/>
    <property type="project" value="UniProtKB-UniRule"/>
</dbReference>
<dbReference type="GO" id="GO:0003700">
    <property type="term" value="F:DNA-binding transcription factor activity"/>
    <property type="evidence" value="ECO:0007669"/>
    <property type="project" value="UniProtKB-UniRule"/>
</dbReference>
<dbReference type="GO" id="GO:0019904">
    <property type="term" value="F:protein domain specific binding"/>
    <property type="evidence" value="ECO:0007669"/>
    <property type="project" value="UniProtKB-UniRule"/>
</dbReference>
<dbReference type="GO" id="GO:0008270">
    <property type="term" value="F:zinc ion binding"/>
    <property type="evidence" value="ECO:0007669"/>
    <property type="project" value="UniProtKB-KW"/>
</dbReference>
<dbReference type="GO" id="GO:0006351">
    <property type="term" value="P:DNA-templated transcription"/>
    <property type="evidence" value="ECO:0007669"/>
    <property type="project" value="UniProtKB-UniRule"/>
</dbReference>
<dbReference type="GO" id="GO:0039645">
    <property type="term" value="P:symbiont-mediated perturbation of host cell cycle G1/S transition checkpoint"/>
    <property type="evidence" value="ECO:0007669"/>
    <property type="project" value="UniProtKB-UniRule"/>
</dbReference>
<dbReference type="GO" id="GO:0052170">
    <property type="term" value="P:symbiont-mediated suppression of host innate immune response"/>
    <property type="evidence" value="ECO:0007669"/>
    <property type="project" value="UniProtKB-KW"/>
</dbReference>
<dbReference type="GO" id="GO:0039502">
    <property type="term" value="P:symbiont-mediated suppression of host type I interferon-mediated signaling pathway"/>
    <property type="evidence" value="ECO:0007669"/>
    <property type="project" value="UniProtKB-UniRule"/>
</dbReference>
<dbReference type="Gene3D" id="3.30.160.330">
    <property type="match status" value="1"/>
</dbReference>
<dbReference type="HAMAP" id="MF_04004">
    <property type="entry name" value="PPV_E7"/>
    <property type="match status" value="1"/>
</dbReference>
<dbReference type="InterPro" id="IPR000148">
    <property type="entry name" value="Papilloma_E7"/>
</dbReference>
<dbReference type="Pfam" id="PF00527">
    <property type="entry name" value="E7"/>
    <property type="match status" value="1"/>
</dbReference>
<dbReference type="PIRSF" id="PIRSF003407">
    <property type="entry name" value="Papvi_E7"/>
    <property type="match status" value="1"/>
</dbReference>
<dbReference type="SUPFAM" id="SSF161234">
    <property type="entry name" value="E7 C-terminal domain-like"/>
    <property type="match status" value="1"/>
</dbReference>
<keyword id="KW-0010">Activator</keyword>
<keyword id="KW-0238">DNA-binding</keyword>
<keyword id="KW-0244">Early protein</keyword>
<keyword id="KW-1078">G1/S host cell cycle checkpoint dysregulation by virus</keyword>
<keyword id="KW-1035">Host cytoplasm</keyword>
<keyword id="KW-1048">Host nucleus</keyword>
<keyword id="KW-0945">Host-virus interaction</keyword>
<keyword id="KW-1090">Inhibition of host innate immune response by virus</keyword>
<keyword id="KW-1114">Inhibition of host interferon signaling pathway by virus</keyword>
<keyword id="KW-0922">Interferon antiviral system evasion</keyword>
<keyword id="KW-0479">Metal-binding</keyword>
<keyword id="KW-1121">Modulation of host cell cycle by virus</keyword>
<keyword id="KW-0553">Oncogene</keyword>
<keyword id="KW-0804">Transcription</keyword>
<keyword id="KW-0805">Transcription regulation</keyword>
<keyword id="KW-0899">Viral immunoevasion</keyword>
<keyword id="KW-0862">Zinc</keyword>
<keyword id="KW-0863">Zinc-finger</keyword>
<comment type="function">
    <text evidence="1">Plays a role in viral genome replication by driving entry of quiescent cells into the cell cycle. Stimulation of progression from G1 to S phase allows the virus to efficiently use the cellular DNA replicating machinery to achieve viral genome replication. E7 protein has both transforming and trans-activating activities. Induces the disassembly of the E2F1 transcription factor from RB1, with subsequent transcriptional activation of E2F1-regulated S-phase genes. Interferes with host histone deacetylation mediated by HDAC1 and HDAC2, leading to transcription activation. Also plays a role in the inhibition of both antiviral and antiproliferative functions of host interferon alpha. Interaction with host TMEM173/STING impairs the ability of TMEM173/STING to sense cytosolic DNA and promote the production of type I interferon (IFN-alpha and IFN-beta).</text>
</comment>
<comment type="subunit">
    <text evidence="1">Homodimer. Homooligomer. Interacts with host RB1; this interaction induces dissociation of RB1-E2F1 complex thereby disrupting RB1 activity. Interacts with host EP300; this interaction represses EP300 transcriptional activity. Interacts with protein E2; this interaction inhibits E7 oncogenic activity. Interacts with host TMEM173/STING; this interaction impairs the ability of TMEM173/STING to sense cytosolic DNA and promote the production of type I interferon (IFN-alpha and IFN-beta).</text>
</comment>
<comment type="subcellular location">
    <subcellularLocation>
        <location evidence="1">Host cytoplasm</location>
    </subcellularLocation>
    <subcellularLocation>
        <location evidence="1">Host nucleus</location>
    </subcellularLocation>
    <text evidence="1">Predominantly found in the host nucleus.</text>
</comment>
<comment type="domain">
    <text evidence="1">The E7 terminal domain is an intrinsically disordered domain, whose flexibility and conformational transitions confer target adaptability to the oncoprotein. It allows adaptation to a variety of protein targets and exposes the PEST degradation sequence that regulates its turnover in the cell.</text>
</comment>
<comment type="PTM">
    <text evidence="1">Highly phosphorylated.</text>
</comment>
<comment type="similarity">
    <text evidence="1">Belongs to the papillomaviridae E7 protein family.</text>
</comment>